<organism>
    <name type="scientific">Mus musculus</name>
    <name type="common">Mouse</name>
    <dbReference type="NCBI Taxonomy" id="10090"/>
    <lineage>
        <taxon>Eukaryota</taxon>
        <taxon>Metazoa</taxon>
        <taxon>Chordata</taxon>
        <taxon>Craniata</taxon>
        <taxon>Vertebrata</taxon>
        <taxon>Euteleostomi</taxon>
        <taxon>Mammalia</taxon>
        <taxon>Eutheria</taxon>
        <taxon>Euarchontoglires</taxon>
        <taxon>Glires</taxon>
        <taxon>Rodentia</taxon>
        <taxon>Myomorpha</taxon>
        <taxon>Muroidea</taxon>
        <taxon>Muridae</taxon>
        <taxon>Murinae</taxon>
        <taxon>Mus</taxon>
        <taxon>Mus</taxon>
    </lineage>
</organism>
<name>RL6_MOUSE</name>
<comment type="function">
    <text evidence="5">Component of the large ribosomal subunit (PubMed:36517592). The ribosome is a large ribonucleoprotein complex responsible for the synthesis of proteins in the cell (PubMed:36517592).</text>
</comment>
<comment type="subunit">
    <text evidence="4 5">Component of the large ribosomal subunit (PubMed:36517592). May bind IPO9 with low affinity (PubMed:11823430).</text>
</comment>
<comment type="subcellular location">
    <subcellularLocation>
        <location evidence="1">Cytoplasm</location>
        <location evidence="1">Cytosol</location>
    </subcellularLocation>
    <subcellularLocation>
        <location evidence="5">Cytoplasm</location>
    </subcellularLocation>
    <subcellularLocation>
        <location evidence="2">Rough endoplasmic reticulum</location>
    </subcellularLocation>
    <text evidence="1 2">Detected on cytosolic polysomes (By similarity). Detected in ribosomes that are associated with the rough endoplasmic reticulum (By similarity).</text>
</comment>
<comment type="similarity">
    <text evidence="6">Belongs to the eukaryotic ribosomal protein eL6 family.</text>
</comment>
<comment type="sequence caution" evidence="6">
    <conflict type="erroneous initiation">
        <sequence resource="EMBL-CDS" id="CAA57513"/>
    </conflict>
</comment>
<sequence length="296" mass="33510">MAGEKAPDTKEKKPAAKKAGSDAAASRPRAAKVAKKVHPKGKKPKKAKPHCSRNPVLVRGIGRYSRSAMYSRKALYKRKYSAAKTKVEKKKKKEKVLATVTKTVGGDKNGGTRVVKLRKMPRYYPTEDVPRKLLSHGKKPFSQHVRRLRSSITPGTVLIILTGRHRGKRVVFLKQLDSGLLLVTGPLVINRVPLRRTHQKFVIATSTKVDISDVKIPKHLTDAYFKKKQLRKPRHQEGEIFDTEKEKYEITEQRKADQKAVDLQILPKIKAVPQLQGYLRSQFSLTNGMYPHKLVF</sequence>
<feature type="chain" id="PRO_0000171010" description="Large ribosomal subunit protein eL6">
    <location>
        <begin position="1"/>
        <end position="296"/>
    </location>
</feature>
<feature type="region of interest" description="Disordered" evidence="3">
    <location>
        <begin position="1"/>
        <end position="53"/>
    </location>
</feature>
<feature type="compositionally biased region" description="Basic and acidic residues" evidence="3">
    <location>
        <begin position="1"/>
        <end position="14"/>
    </location>
</feature>
<feature type="compositionally biased region" description="Low complexity" evidence="3">
    <location>
        <begin position="17"/>
        <end position="28"/>
    </location>
</feature>
<feature type="compositionally biased region" description="Basic residues" evidence="3">
    <location>
        <begin position="29"/>
        <end position="51"/>
    </location>
</feature>
<feature type="modified residue" description="N6-succinyllysine" evidence="9">
    <location>
        <position position="102"/>
    </location>
</feature>
<feature type="modified residue" description="Phosphoserine" evidence="1">
    <location>
        <position position="135"/>
    </location>
</feature>
<feature type="modified residue" description="N6-succinyllysine" evidence="9">
    <location>
        <position position="215"/>
    </location>
</feature>
<feature type="modified residue" description="N6-acetyllysine" evidence="9">
    <location>
        <position position="247"/>
    </location>
</feature>
<feature type="cross-link" description="Glycyl lysine isopeptide (Lys-Gly) (interchain with G-Cter in SUMO2)" evidence="1">
    <location>
        <position position="5"/>
    </location>
</feature>
<feature type="sequence conflict" description="In Ref. 3." evidence="6" ref="3">
    <original>K</original>
    <variation>R</variation>
    <location>
        <position position="5"/>
    </location>
</feature>
<feature type="sequence conflict" description="In Ref. 3; CAA57513." evidence="6" ref="3">
    <original>K</original>
    <variation>M</variation>
    <location>
        <position position="10"/>
    </location>
</feature>
<feature type="sequence conflict" description="In Ref. 2; AAH62880." evidence="6" ref="2">
    <original>L</original>
    <variation>F</variation>
    <location>
        <position position="75"/>
    </location>
</feature>
<accession>P47911</accession>
<accession>Q6P5I2</accession>
<accession>Q925C3</accession>
<keyword id="KW-0002">3D-structure</keyword>
<keyword id="KW-0007">Acetylation</keyword>
<keyword id="KW-0963">Cytoplasm</keyword>
<keyword id="KW-0256">Endoplasmic reticulum</keyword>
<keyword id="KW-1017">Isopeptide bond</keyword>
<keyword id="KW-0597">Phosphoprotein</keyword>
<keyword id="KW-1185">Reference proteome</keyword>
<keyword id="KW-0687">Ribonucleoprotein</keyword>
<keyword id="KW-0689">Ribosomal protein</keyword>
<keyword id="KW-0832">Ubl conjugation</keyword>
<evidence type="ECO:0000250" key="1">
    <source>
        <dbReference type="UniProtKB" id="Q02878"/>
    </source>
</evidence>
<evidence type="ECO:0000250" key="2">
    <source>
        <dbReference type="UniProtKB" id="Q2YGT9"/>
    </source>
</evidence>
<evidence type="ECO:0000256" key="3">
    <source>
        <dbReference type="SAM" id="MobiDB-lite"/>
    </source>
</evidence>
<evidence type="ECO:0000269" key="4">
    <source>
    </source>
</evidence>
<evidence type="ECO:0000269" key="5">
    <source>
    </source>
</evidence>
<evidence type="ECO:0000305" key="6"/>
<evidence type="ECO:0007744" key="7">
    <source>
        <dbReference type="PDB" id="7CPU"/>
    </source>
</evidence>
<evidence type="ECO:0007744" key="8">
    <source>
        <dbReference type="PDB" id="7CPV"/>
    </source>
</evidence>
<evidence type="ECO:0007744" key="9">
    <source>
    </source>
</evidence>
<proteinExistence type="evidence at protein level"/>
<gene>
    <name type="primary">Rpl6</name>
</gene>
<protein>
    <recommendedName>
        <fullName evidence="6">Large ribosomal subunit protein eL6</fullName>
    </recommendedName>
    <alternativeName>
        <fullName>60S ribosomal protein L6</fullName>
    </alternativeName>
    <alternativeName>
        <fullName>TAX-responsive enhancer element-binding protein 107</fullName>
        <shortName>TAXREB107</shortName>
    </alternativeName>
</protein>
<reference key="1">
    <citation type="submission" date="2001-04" db="EMBL/GenBank/DDBJ databases">
        <authorList>
            <person name="Wang J.-S."/>
            <person name="Han H."/>
            <person name="Yang X."/>
            <person name="Li R."/>
            <person name="Zhou P."/>
        </authorList>
    </citation>
    <scope>NUCLEOTIDE SEQUENCE [GENOMIC DNA]</scope>
    <source>
        <strain>129/Sv</strain>
    </source>
</reference>
<reference key="2">
    <citation type="journal article" date="2004" name="Genome Res.">
        <title>The status, quality, and expansion of the NIH full-length cDNA project: the Mammalian Gene Collection (MGC).</title>
        <authorList>
            <consortium name="The MGC Project Team"/>
        </authorList>
    </citation>
    <scope>NUCLEOTIDE SEQUENCE [LARGE SCALE MRNA]</scope>
    <source>
        <strain>C57BL/6J</strain>
        <tissue>Brain</tissue>
    </source>
</reference>
<reference key="3">
    <citation type="journal article" date="1995" name="Biochim. Biophys. Acta">
        <title>The mouse homologue of the HTLV-I tax responsive element binding protein TAXREB107 is a highly conserved gene which may regulate some basal cellular functions.</title>
        <authorList>
            <person name="Nacken W."/>
            <person name="Klempt M."/>
            <person name="Sorg C."/>
        </authorList>
    </citation>
    <scope>NUCLEOTIDE SEQUENCE [MRNA] OF 4-296</scope>
</reference>
<reference key="4">
    <citation type="journal article" date="2002" name="EMBO J.">
        <title>Importins fulfill a dual function as nuclear import receptors and cytoplasmic chaperones for exposed basic domains.</title>
        <authorList>
            <person name="Jaekel S."/>
            <person name="Mingot J.-M."/>
            <person name="Schwarzmaier P."/>
            <person name="Hartmann E."/>
            <person name="Goerlich D."/>
        </authorList>
    </citation>
    <scope>INTERACTION WITH IPO9</scope>
</reference>
<reference key="5">
    <citation type="journal article" date="2010" name="Cell">
        <title>A tissue-specific atlas of mouse protein phosphorylation and expression.</title>
        <authorList>
            <person name="Huttlin E.L."/>
            <person name="Jedrychowski M.P."/>
            <person name="Elias J.E."/>
            <person name="Goswami T."/>
            <person name="Rad R."/>
            <person name="Beausoleil S.A."/>
            <person name="Villen J."/>
            <person name="Haas W."/>
            <person name="Sowa M.E."/>
            <person name="Gygi S.P."/>
        </authorList>
    </citation>
    <scope>IDENTIFICATION BY MASS SPECTROMETRY [LARGE SCALE ANALYSIS]</scope>
    <source>
        <tissue>Brain</tissue>
        <tissue>Brown adipose tissue</tissue>
        <tissue>Heart</tissue>
        <tissue>Kidney</tissue>
        <tissue>Liver</tissue>
        <tissue>Lung</tissue>
        <tissue>Pancreas</tissue>
        <tissue>Spleen</tissue>
        <tissue>Testis</tissue>
    </source>
</reference>
<reference key="6">
    <citation type="journal article" date="2013" name="Mol. Cell">
        <title>SIRT5-mediated lysine desuccinylation impacts diverse metabolic pathways.</title>
        <authorList>
            <person name="Park J."/>
            <person name="Chen Y."/>
            <person name="Tishkoff D.X."/>
            <person name="Peng C."/>
            <person name="Tan M."/>
            <person name="Dai L."/>
            <person name="Xie Z."/>
            <person name="Zhang Y."/>
            <person name="Zwaans B.M."/>
            <person name="Skinner M.E."/>
            <person name="Lombard D.B."/>
            <person name="Zhao Y."/>
        </authorList>
    </citation>
    <scope>ACETYLATION [LARGE SCALE ANALYSIS] AT LYS-247</scope>
    <scope>SUCCINYLATION [LARGE SCALE ANALYSIS] AT LYS-102 AND LYS-215</scope>
    <scope>IDENTIFICATION BY MASS SPECTROMETRY [LARGE SCALE ANALYSIS]</scope>
    <source>
        <tissue>Embryonic fibroblast</tissue>
    </source>
</reference>
<reference evidence="7 8" key="7">
    <citation type="journal article" date="2022" name="Nature">
        <title>A male germ-cell-specific ribosome controls male fertility.</title>
        <authorList>
            <person name="Li H."/>
            <person name="Huo Y."/>
            <person name="He X."/>
            <person name="Yao L."/>
            <person name="Zhang H."/>
            <person name="Cui Y."/>
            <person name="Xiao H."/>
            <person name="Xie W."/>
            <person name="Zhang D."/>
            <person name="Wang Y."/>
            <person name="Zhang S."/>
            <person name="Tu H."/>
            <person name="Cheng Y."/>
            <person name="Guo Y."/>
            <person name="Cao X."/>
            <person name="Zhu Y."/>
            <person name="Jiang T."/>
            <person name="Guo X."/>
            <person name="Qin Y."/>
            <person name="Sha J."/>
        </authorList>
    </citation>
    <scope>STRUCTURE BY ELECTRON MICROSCOPY (3.03 ANGSTROMS) OF RIBOSOME</scope>
    <scope>FUNCTION</scope>
    <scope>SUBUNIT</scope>
    <scope>SUBCELLULAR LOCATION</scope>
</reference>
<dbReference type="EMBL" id="AF374195">
    <property type="protein sequence ID" value="AAK56936.1"/>
    <property type="molecule type" value="Genomic_DNA"/>
</dbReference>
<dbReference type="EMBL" id="BC062880">
    <property type="protein sequence ID" value="AAH62880.1"/>
    <property type="molecule type" value="mRNA"/>
</dbReference>
<dbReference type="EMBL" id="X81987">
    <property type="protein sequence ID" value="CAA57513.1"/>
    <property type="status" value="ALT_INIT"/>
    <property type="molecule type" value="mRNA"/>
</dbReference>
<dbReference type="CCDS" id="CCDS19632.1"/>
<dbReference type="PIR" id="S55922">
    <property type="entry name" value="S55922"/>
</dbReference>
<dbReference type="RefSeq" id="NP_001408239.1">
    <property type="nucleotide sequence ID" value="NM_001421310.1"/>
</dbReference>
<dbReference type="RefSeq" id="NP_035420.2">
    <property type="nucleotide sequence ID" value="NM_011290.5"/>
</dbReference>
<dbReference type="RefSeq" id="XP_006530290.1">
    <property type="nucleotide sequence ID" value="XM_006530227.1"/>
</dbReference>
<dbReference type="PDB" id="6SWA">
    <property type="method" value="EM"/>
    <property type="resolution" value="3.10 A"/>
    <property type="chains" value="E=1-296"/>
</dbReference>
<dbReference type="PDB" id="7CPU">
    <property type="method" value="EM"/>
    <property type="resolution" value="2.82 A"/>
    <property type="chains" value="LE=1-296"/>
</dbReference>
<dbReference type="PDB" id="7CPV">
    <property type="method" value="EM"/>
    <property type="resolution" value="3.03 A"/>
    <property type="chains" value="LE=1-296"/>
</dbReference>
<dbReference type="PDB" id="7LS1">
    <property type="method" value="EM"/>
    <property type="resolution" value="3.30 A"/>
    <property type="chains" value="H2=1-296"/>
</dbReference>
<dbReference type="PDB" id="7LS2">
    <property type="method" value="EM"/>
    <property type="resolution" value="3.10 A"/>
    <property type="chains" value="H2=1-296"/>
</dbReference>
<dbReference type="PDBsum" id="6SWA"/>
<dbReference type="PDBsum" id="7CPU"/>
<dbReference type="PDBsum" id="7CPV"/>
<dbReference type="PDBsum" id="7LS1"/>
<dbReference type="PDBsum" id="7LS2"/>
<dbReference type="EMDB" id="EMD-10321"/>
<dbReference type="EMDB" id="EMD-23500"/>
<dbReference type="EMDB" id="EMD-23501"/>
<dbReference type="EMDB" id="EMD-30432"/>
<dbReference type="EMDB" id="EMD-30433"/>
<dbReference type="SMR" id="P47911"/>
<dbReference type="BioGRID" id="202987">
    <property type="interactions" value="139"/>
</dbReference>
<dbReference type="ComplexPortal" id="CPX-5262">
    <property type="entry name" value="60S cytosolic large ribosomal subunit"/>
</dbReference>
<dbReference type="ComplexPortal" id="CPX-7662">
    <property type="entry name" value="60S cytosolic large ribosomal subunit, testis-specific variant"/>
</dbReference>
<dbReference type="ComplexPortal" id="CPX-7663">
    <property type="entry name" value="60S cytosolic large ribosomal subunit, striated muscle variant"/>
</dbReference>
<dbReference type="CORUM" id="P47911"/>
<dbReference type="FunCoup" id="P47911">
    <property type="interactions" value="2933"/>
</dbReference>
<dbReference type="IntAct" id="P47911">
    <property type="interactions" value="6"/>
</dbReference>
<dbReference type="STRING" id="10090.ENSMUSP00000031617"/>
<dbReference type="GlyGen" id="P47911">
    <property type="glycosylation" value="2 sites, 1 O-linked glycan (1 site)"/>
</dbReference>
<dbReference type="iPTMnet" id="P47911"/>
<dbReference type="PhosphoSitePlus" id="P47911"/>
<dbReference type="SwissPalm" id="P47911"/>
<dbReference type="jPOST" id="P47911"/>
<dbReference type="PaxDb" id="10090-ENSMUSP00000031617"/>
<dbReference type="PeptideAtlas" id="P47911"/>
<dbReference type="ProteomicsDB" id="253253"/>
<dbReference type="Pumba" id="P47911"/>
<dbReference type="Antibodypedia" id="31186">
    <property type="antibodies" value="118 antibodies from 26 providers"/>
</dbReference>
<dbReference type="DNASU" id="19988"/>
<dbReference type="Ensembl" id="ENSMUST00000031617.13">
    <property type="protein sequence ID" value="ENSMUSP00000031617.10"/>
    <property type="gene ID" value="ENSMUSG00000029614.14"/>
</dbReference>
<dbReference type="GeneID" id="19988"/>
<dbReference type="KEGG" id="mmu:19988"/>
<dbReference type="UCSC" id="uc008ziq.3">
    <property type="organism name" value="mouse"/>
</dbReference>
<dbReference type="AGR" id="MGI:108057"/>
<dbReference type="CTD" id="6128"/>
<dbReference type="MGI" id="MGI:108057">
    <property type="gene designation" value="Rpl6"/>
</dbReference>
<dbReference type="VEuPathDB" id="HostDB:ENSMUSG00000029614"/>
<dbReference type="eggNOG" id="KOG1694">
    <property type="taxonomic scope" value="Eukaryota"/>
</dbReference>
<dbReference type="GeneTree" id="ENSGT00390000003682"/>
<dbReference type="HOGENOM" id="CLU_066767_0_1_1"/>
<dbReference type="InParanoid" id="P47911"/>
<dbReference type="OMA" id="KWYNADD"/>
<dbReference type="OrthoDB" id="9630499at2759"/>
<dbReference type="PhylomeDB" id="P47911"/>
<dbReference type="TreeFam" id="TF300115"/>
<dbReference type="Reactome" id="R-MMU-156827">
    <property type="pathway name" value="L13a-mediated translational silencing of Ceruloplasmin expression"/>
</dbReference>
<dbReference type="Reactome" id="R-MMU-1799339">
    <property type="pathway name" value="SRP-dependent cotranslational protein targeting to membrane"/>
</dbReference>
<dbReference type="Reactome" id="R-MMU-6791226">
    <property type="pathway name" value="Major pathway of rRNA processing in the nucleolus and cytosol"/>
</dbReference>
<dbReference type="Reactome" id="R-MMU-72689">
    <property type="pathway name" value="Formation of a pool of free 40S subunits"/>
</dbReference>
<dbReference type="Reactome" id="R-MMU-72706">
    <property type="pathway name" value="GTP hydrolysis and joining of the 60S ribosomal subunit"/>
</dbReference>
<dbReference type="Reactome" id="R-MMU-975956">
    <property type="pathway name" value="Nonsense Mediated Decay (NMD) independent of the Exon Junction Complex (EJC)"/>
</dbReference>
<dbReference type="Reactome" id="R-MMU-975957">
    <property type="pathway name" value="Nonsense Mediated Decay (NMD) enhanced by the Exon Junction Complex (EJC)"/>
</dbReference>
<dbReference type="BioGRID-ORCS" id="19988">
    <property type="hits" value="22 hits in 71 CRISPR screens"/>
</dbReference>
<dbReference type="CD-CODE" id="CE726F99">
    <property type="entry name" value="Postsynaptic density"/>
</dbReference>
<dbReference type="ChiTaRS" id="Rpl6">
    <property type="organism name" value="mouse"/>
</dbReference>
<dbReference type="PRO" id="PR:P47911"/>
<dbReference type="Proteomes" id="UP000000589">
    <property type="component" value="Chromosome 5"/>
</dbReference>
<dbReference type="RNAct" id="P47911">
    <property type="molecule type" value="protein"/>
</dbReference>
<dbReference type="Bgee" id="ENSMUSG00000029614">
    <property type="expression patterns" value="Expressed in epiblast (generic) and 64 other cell types or tissues"/>
</dbReference>
<dbReference type="ExpressionAtlas" id="P47911">
    <property type="expression patterns" value="baseline and differential"/>
</dbReference>
<dbReference type="GO" id="GO:0005737">
    <property type="term" value="C:cytoplasm"/>
    <property type="evidence" value="ECO:0000314"/>
    <property type="project" value="ComplexPortal"/>
</dbReference>
<dbReference type="GO" id="GO:0036464">
    <property type="term" value="C:cytoplasmic ribonucleoprotein granule"/>
    <property type="evidence" value="ECO:0007669"/>
    <property type="project" value="Ensembl"/>
</dbReference>
<dbReference type="GO" id="GO:0005829">
    <property type="term" value="C:cytosol"/>
    <property type="evidence" value="ECO:0000304"/>
    <property type="project" value="Reactome"/>
</dbReference>
<dbReference type="GO" id="GO:0022625">
    <property type="term" value="C:cytosolic large ribosomal subunit"/>
    <property type="evidence" value="ECO:0000314"/>
    <property type="project" value="UniProtKB"/>
</dbReference>
<dbReference type="GO" id="GO:0005730">
    <property type="term" value="C:nucleolus"/>
    <property type="evidence" value="ECO:0000266"/>
    <property type="project" value="MGI"/>
</dbReference>
<dbReference type="GO" id="GO:0005634">
    <property type="term" value="C:nucleus"/>
    <property type="evidence" value="ECO:0000266"/>
    <property type="project" value="MGI"/>
</dbReference>
<dbReference type="GO" id="GO:0098794">
    <property type="term" value="C:postsynapse"/>
    <property type="evidence" value="ECO:0000303"/>
    <property type="project" value="SynGO"/>
</dbReference>
<dbReference type="GO" id="GO:0014069">
    <property type="term" value="C:postsynaptic density"/>
    <property type="evidence" value="ECO:0000314"/>
    <property type="project" value="SynGO"/>
</dbReference>
<dbReference type="GO" id="GO:0098793">
    <property type="term" value="C:presynapse"/>
    <property type="evidence" value="ECO:0000303"/>
    <property type="project" value="SynGO"/>
</dbReference>
<dbReference type="GO" id="GO:0005840">
    <property type="term" value="C:ribosome"/>
    <property type="evidence" value="ECO:0000303"/>
    <property type="project" value="SynGO"/>
</dbReference>
<dbReference type="GO" id="GO:0005791">
    <property type="term" value="C:rough endoplasmic reticulum"/>
    <property type="evidence" value="ECO:0007669"/>
    <property type="project" value="UniProtKB-SubCell"/>
</dbReference>
<dbReference type="GO" id="GO:0045202">
    <property type="term" value="C:synapse"/>
    <property type="evidence" value="ECO:0000314"/>
    <property type="project" value="SynGO"/>
</dbReference>
<dbReference type="GO" id="GO:0003735">
    <property type="term" value="F:structural constituent of ribosome"/>
    <property type="evidence" value="ECO:0000314"/>
    <property type="project" value="UniProtKB"/>
</dbReference>
<dbReference type="GO" id="GO:0002181">
    <property type="term" value="P:cytoplasmic translation"/>
    <property type="evidence" value="ECO:0000250"/>
    <property type="project" value="UniProtKB"/>
</dbReference>
<dbReference type="GO" id="GO:0140242">
    <property type="term" value="P:translation at postsynapse"/>
    <property type="evidence" value="ECO:0000303"/>
    <property type="project" value="SynGO"/>
</dbReference>
<dbReference type="GO" id="GO:0140236">
    <property type="term" value="P:translation at presynapse"/>
    <property type="evidence" value="ECO:0000303"/>
    <property type="project" value="SynGO"/>
</dbReference>
<dbReference type="CDD" id="cd13156">
    <property type="entry name" value="KOW_RPL6"/>
    <property type="match status" value="1"/>
</dbReference>
<dbReference type="FunFam" id="2.30.30.30:FF:000020">
    <property type="entry name" value="60S ribosomal protein L6"/>
    <property type="match status" value="1"/>
</dbReference>
<dbReference type="Gene3D" id="2.30.30.30">
    <property type="match status" value="1"/>
</dbReference>
<dbReference type="InterPro" id="IPR000915">
    <property type="entry name" value="60S_ribosomal_eL6"/>
</dbReference>
<dbReference type="InterPro" id="IPR014722">
    <property type="entry name" value="Rib_uL2_dom2"/>
</dbReference>
<dbReference type="InterPro" id="IPR049633">
    <property type="entry name" value="Ribosomal_eL6_CS"/>
</dbReference>
<dbReference type="InterPro" id="IPR041997">
    <property type="entry name" value="Ribosomal_eL6_KOW"/>
</dbReference>
<dbReference type="InterPro" id="IPR005568">
    <property type="entry name" value="Ribosomal_uL6_N"/>
</dbReference>
<dbReference type="InterPro" id="IPR008991">
    <property type="entry name" value="Translation_prot_SH3-like_sf"/>
</dbReference>
<dbReference type="PANTHER" id="PTHR10715">
    <property type="entry name" value="60S RIBOSOMAL PROTEIN L6"/>
    <property type="match status" value="1"/>
</dbReference>
<dbReference type="PANTHER" id="PTHR10715:SF0">
    <property type="entry name" value="LARGE RIBOSOMAL SUBUNIT PROTEIN EL6"/>
    <property type="match status" value="1"/>
</dbReference>
<dbReference type="Pfam" id="PF01159">
    <property type="entry name" value="Ribosomal_L6e"/>
    <property type="match status" value="1"/>
</dbReference>
<dbReference type="Pfam" id="PF03868">
    <property type="entry name" value="Ribosomal_L6e_N"/>
    <property type="match status" value="1"/>
</dbReference>
<dbReference type="SUPFAM" id="SSF50104">
    <property type="entry name" value="Translation proteins SH3-like domain"/>
    <property type="match status" value="1"/>
</dbReference>
<dbReference type="PROSITE" id="PS01170">
    <property type="entry name" value="RIBOSOMAL_L6E"/>
    <property type="match status" value="1"/>
</dbReference>